<gene>
    <name evidence="8" type="primary">rec27</name>
    <name type="synonym">mug41</name>
    <name evidence="8" type="ORF">SPBC577.05c</name>
</gene>
<accession>Q9USR4</accession>
<accession>A0AAN2H976</accession>
<dbReference type="EMBL" id="CU329671">
    <property type="protein sequence ID" value="CAK9839603.1"/>
    <property type="molecule type" value="Genomic_DNA"/>
</dbReference>
<dbReference type="PIR" id="T40549">
    <property type="entry name" value="T40549"/>
</dbReference>
<dbReference type="SMR" id="Q9USR4"/>
<dbReference type="BioGRID" id="277598">
    <property type="interactions" value="3"/>
</dbReference>
<dbReference type="STRING" id="284812.Q9USR4"/>
<dbReference type="PaxDb" id="4896-SPBC577.05c.1"/>
<dbReference type="EnsemblFungi" id="SPBC577.05c.1">
    <property type="protein sequence ID" value="SPBC577.05c.1:pep"/>
    <property type="gene ID" value="SPBC577.05c"/>
</dbReference>
<dbReference type="PomBase" id="SPBC577.05c">
    <property type="gene designation" value="rec27"/>
</dbReference>
<dbReference type="VEuPathDB" id="FungiDB:SPBC577.05c"/>
<dbReference type="HOGENOM" id="CLU_1897430_0_0_1"/>
<dbReference type="InParanoid" id="Q9USR4"/>
<dbReference type="PRO" id="PR:Q9USR4"/>
<dbReference type="Proteomes" id="UP000002485">
    <property type="component" value="Chromosome II"/>
</dbReference>
<dbReference type="GO" id="GO:0000785">
    <property type="term" value="C:chromatin"/>
    <property type="evidence" value="ECO:0000314"/>
    <property type="project" value="PomBase"/>
</dbReference>
<dbReference type="GO" id="GO:0005829">
    <property type="term" value="C:cytosol"/>
    <property type="evidence" value="ECO:0007005"/>
    <property type="project" value="PomBase"/>
</dbReference>
<dbReference type="GO" id="GO:0030998">
    <property type="term" value="C:linear element"/>
    <property type="evidence" value="ECO:0000314"/>
    <property type="project" value="PomBase"/>
</dbReference>
<dbReference type="GO" id="GO:0005634">
    <property type="term" value="C:nucleus"/>
    <property type="evidence" value="ECO:0007005"/>
    <property type="project" value="PomBase"/>
</dbReference>
<dbReference type="GO" id="GO:0031490">
    <property type="term" value="F:chromatin DNA binding"/>
    <property type="evidence" value="ECO:0000314"/>
    <property type="project" value="PomBase"/>
</dbReference>
<dbReference type="GO" id="GO:0007059">
    <property type="term" value="P:chromosome segregation"/>
    <property type="evidence" value="ECO:0007669"/>
    <property type="project" value="UniProtKB-KW"/>
</dbReference>
<dbReference type="GO" id="GO:0010780">
    <property type="term" value="P:meiotic DNA double-strand break formation involved in reciprocal meiotic recombination"/>
    <property type="evidence" value="ECO:0000269"/>
    <property type="project" value="PomBase"/>
</dbReference>
<dbReference type="GO" id="GO:0007131">
    <property type="term" value="P:reciprocal meiotic recombination"/>
    <property type="evidence" value="ECO:0000315"/>
    <property type="project" value="PomBase"/>
</dbReference>
<keyword id="KW-0158">Chromosome</keyword>
<keyword id="KW-0159">Chromosome partition</keyword>
<keyword id="KW-0175">Coiled coil</keyword>
<keyword id="KW-0963">Cytoplasm</keyword>
<keyword id="KW-0469">Meiosis</keyword>
<keyword id="KW-0539">Nucleus</keyword>
<keyword id="KW-1185">Reference proteome</keyword>
<protein>
    <recommendedName>
        <fullName evidence="7">Linear element protein rec27</fullName>
    </recommendedName>
    <alternativeName>
        <fullName>Meiotic recombination protein rec27</fullName>
    </alternativeName>
    <alternativeName>
        <fullName>Meiotically up-regulated gene 41 protein</fullName>
    </alternativeName>
</protein>
<comment type="function">
    <text evidence="2 4 5">During meiotic DNA recombination, binds to and activates DNA double-strand break (DSB) hotspot sites.</text>
</comment>
<comment type="subunit">
    <text evidence="4">Component of linear elements (LinEs), which are similar to synaptonemal complexes, at least composed of rec27, rec25, rec10 and mug20.</text>
</comment>
<comment type="subcellular location">
    <subcellularLocation>
        <location evidence="3">Cytoplasm</location>
    </subcellularLocation>
    <subcellularLocation>
        <location evidence="3 4 6">Nucleus</location>
    </subcellularLocation>
    <subcellularLocation>
        <location evidence="4">Chromosome</location>
    </subcellularLocation>
    <text evidence="4">Localizes to chromosomal double-strand break (DSB) hotspot sites during the meiotic cell cycle.</text>
</comment>
<comment type="developmental stage">
    <text evidence="6">Present from pre-meiotic DNA replication and disappears following meiotic prophase I.</text>
</comment>
<comment type="disruption phenotype">
    <text evidence="4 6">Abnormal linear element formation (PubMed:23395004, PubMed:33825974). Strongly decreases DNA double-strand break formation during the meiotic cell cycle (PubMed:23395004). Abnormal sporulation (PubMed:33825974).</text>
</comment>
<proteinExistence type="evidence at protein level"/>
<evidence type="ECO:0000255" key="1"/>
<evidence type="ECO:0000269" key="2">
    <source>
    </source>
</evidence>
<evidence type="ECO:0000269" key="3">
    <source>
    </source>
</evidence>
<evidence type="ECO:0000269" key="4">
    <source>
    </source>
</evidence>
<evidence type="ECO:0000269" key="5">
    <source>
    </source>
</evidence>
<evidence type="ECO:0000269" key="6">
    <source>
    </source>
</evidence>
<evidence type="ECO:0000305" key="7"/>
<evidence type="ECO:0000312" key="8">
    <source>
        <dbReference type="PomBase" id="SPBC577.05c"/>
    </source>
</evidence>
<reference key="1">
    <citation type="journal article" date="2002" name="Nature">
        <title>The genome sequence of Schizosaccharomyces pombe.</title>
        <authorList>
            <person name="Wood V."/>
            <person name="Gwilliam R."/>
            <person name="Rajandream M.A."/>
            <person name="Lyne M.H."/>
            <person name="Lyne R."/>
            <person name="Stewart A."/>
            <person name="Sgouros J.G."/>
            <person name="Peat N."/>
            <person name="Hayles J."/>
            <person name="Baker S.G."/>
            <person name="Basham D."/>
            <person name="Bowman S."/>
            <person name="Brooks K."/>
            <person name="Brown D."/>
            <person name="Brown S."/>
            <person name="Chillingworth T."/>
            <person name="Churcher C.M."/>
            <person name="Collins M."/>
            <person name="Connor R."/>
            <person name="Cronin A."/>
            <person name="Davis P."/>
            <person name="Feltwell T."/>
            <person name="Fraser A."/>
            <person name="Gentles S."/>
            <person name="Goble A."/>
            <person name="Hamlin N."/>
            <person name="Harris D.E."/>
            <person name="Hidalgo J."/>
            <person name="Hodgson G."/>
            <person name="Holroyd S."/>
            <person name="Hornsby T."/>
            <person name="Howarth S."/>
            <person name="Huckle E.J."/>
            <person name="Hunt S."/>
            <person name="Jagels K."/>
            <person name="James K.D."/>
            <person name="Jones L."/>
            <person name="Jones M."/>
            <person name="Leather S."/>
            <person name="McDonald S."/>
            <person name="McLean J."/>
            <person name="Mooney P."/>
            <person name="Moule S."/>
            <person name="Mungall K.L."/>
            <person name="Murphy L.D."/>
            <person name="Niblett D."/>
            <person name="Odell C."/>
            <person name="Oliver K."/>
            <person name="O'Neil S."/>
            <person name="Pearson D."/>
            <person name="Quail M.A."/>
            <person name="Rabbinowitsch E."/>
            <person name="Rutherford K.M."/>
            <person name="Rutter S."/>
            <person name="Saunders D."/>
            <person name="Seeger K."/>
            <person name="Sharp S."/>
            <person name="Skelton J."/>
            <person name="Simmonds M.N."/>
            <person name="Squares R."/>
            <person name="Squares S."/>
            <person name="Stevens K."/>
            <person name="Taylor K."/>
            <person name="Taylor R.G."/>
            <person name="Tivey A."/>
            <person name="Walsh S.V."/>
            <person name="Warren T."/>
            <person name="Whitehead S."/>
            <person name="Woodward J.R."/>
            <person name="Volckaert G."/>
            <person name="Aert R."/>
            <person name="Robben J."/>
            <person name="Grymonprez B."/>
            <person name="Weltjens I."/>
            <person name="Vanstreels E."/>
            <person name="Rieger M."/>
            <person name="Schaefer M."/>
            <person name="Mueller-Auer S."/>
            <person name="Gabel C."/>
            <person name="Fuchs M."/>
            <person name="Duesterhoeft A."/>
            <person name="Fritzc C."/>
            <person name="Holzer E."/>
            <person name="Moestl D."/>
            <person name="Hilbert H."/>
            <person name="Borzym K."/>
            <person name="Langer I."/>
            <person name="Beck A."/>
            <person name="Lehrach H."/>
            <person name="Reinhardt R."/>
            <person name="Pohl T.M."/>
            <person name="Eger P."/>
            <person name="Zimmermann W."/>
            <person name="Wedler H."/>
            <person name="Wambutt R."/>
            <person name="Purnelle B."/>
            <person name="Goffeau A."/>
            <person name="Cadieu E."/>
            <person name="Dreano S."/>
            <person name="Gloux S."/>
            <person name="Lelaure V."/>
            <person name="Mottier S."/>
            <person name="Galibert F."/>
            <person name="Aves S.J."/>
            <person name="Xiang Z."/>
            <person name="Hunt C."/>
            <person name="Moore K."/>
            <person name="Hurst S.M."/>
            <person name="Lucas M."/>
            <person name="Rochet M."/>
            <person name="Gaillardin C."/>
            <person name="Tallada V.A."/>
            <person name="Garzon A."/>
            <person name="Thode G."/>
            <person name="Daga R.R."/>
            <person name="Cruzado L."/>
            <person name="Jimenez J."/>
            <person name="Sanchez M."/>
            <person name="del Rey F."/>
            <person name="Benito J."/>
            <person name="Dominguez A."/>
            <person name="Revuelta J.L."/>
            <person name="Moreno S."/>
            <person name="Armstrong J."/>
            <person name="Forsburg S.L."/>
            <person name="Cerutti L."/>
            <person name="Lowe T."/>
            <person name="McCombie W.R."/>
            <person name="Paulsen I."/>
            <person name="Potashkin J."/>
            <person name="Shpakovski G.V."/>
            <person name="Ussery D."/>
            <person name="Barrell B.G."/>
            <person name="Nurse P."/>
        </authorList>
    </citation>
    <scope>NUCLEOTIDE SEQUENCE [LARGE SCALE GENOMIC DNA]</scope>
    <source>
        <strain>972 / ATCC 24843</strain>
    </source>
</reference>
<reference key="2">
    <citation type="journal article" date="2005" name="Curr. Biol.">
        <title>A large-scale screen in S. pombe identifies seven novel genes required for critical meiotic events.</title>
        <authorList>
            <person name="Martin-Castellanos C."/>
            <person name="Blanco M."/>
            <person name="Rozalen A.E."/>
            <person name="Perez-Hidalgo L."/>
            <person name="Garcia A.I."/>
            <person name="Conde F."/>
            <person name="Mata J."/>
            <person name="Ellermeier C."/>
            <person name="Davis L."/>
            <person name="San-Segundo P."/>
            <person name="Smith G.R."/>
            <person name="Moreno S."/>
        </authorList>
    </citation>
    <scope>FUNCTION IN MEIOSIS</scope>
</reference>
<reference key="3">
    <citation type="journal article" date="2006" name="Nat. Biotechnol.">
        <title>ORFeome cloning and global analysis of protein localization in the fission yeast Schizosaccharomyces pombe.</title>
        <authorList>
            <person name="Matsuyama A."/>
            <person name="Arai R."/>
            <person name="Yashiroda Y."/>
            <person name="Shirai A."/>
            <person name="Kamata A."/>
            <person name="Sekido S."/>
            <person name="Kobayashi Y."/>
            <person name="Hashimoto A."/>
            <person name="Hamamoto M."/>
            <person name="Hiraoka Y."/>
            <person name="Horinouchi S."/>
            <person name="Yoshida M."/>
        </authorList>
    </citation>
    <scope>SUBCELLULAR LOCATION [LARGE SCALE ANALYSIS]</scope>
</reference>
<reference key="4">
    <citation type="journal article" date="2013" name="Mol. Cell">
        <title>Protein determinants of meiotic DNA break hot spots.</title>
        <authorList>
            <person name="Fowler K.R."/>
            <person name="Gutierrez-Velasco S."/>
            <person name="Martin-Castellanos C."/>
            <person name="Smith G.R."/>
        </authorList>
    </citation>
    <scope>FUNCTION</scope>
    <scope>IDENTIFICATION IN THE LINEAR ELEMENT COMPLEX</scope>
    <scope>SUBCELLULAR LOCATION</scope>
    <scope>DISRUPTION PHENOTYPE</scope>
</reference>
<reference key="5">
    <citation type="journal article" date="2017" name="Sci. Rep.">
        <title>Functional organization of protein determinants of meiotic DNA break hotspots.</title>
        <authorList>
            <person name="Ma L."/>
            <person name="Fowler K.R."/>
            <person name="Martin-Castellanos C."/>
            <person name="Smith G.R."/>
        </authorList>
    </citation>
    <scope>IDENTIFICATION OF INITIATOR METHIONINE</scope>
    <scope>FUNCTION</scope>
    <scope>MUTAGENESIS OF LYS-28; ARG-32; LYS-36 AND GLN-119</scope>
</reference>
<reference key="6">
    <citation type="journal article" date="2021" name="Chromosoma">
        <title>Linear elements are stable structures along the chromosome axis in fission yeast meiosis.</title>
        <authorList>
            <person name="Ding D.Q."/>
            <person name="Matsuda A."/>
            <person name="Okamasa K."/>
            <person name="Hiraoka Y."/>
        </authorList>
    </citation>
    <scope>SUBCELLULAR LOCATION</scope>
    <scope>DEVELOPMENTAL STAGE</scope>
    <scope>DISRUPTION PHENOTYPE</scope>
</reference>
<name>REC27_SCHPO</name>
<organism>
    <name type="scientific">Schizosaccharomyces pombe (strain 972 / ATCC 24843)</name>
    <name type="common">Fission yeast</name>
    <dbReference type="NCBI Taxonomy" id="284812"/>
    <lineage>
        <taxon>Eukaryota</taxon>
        <taxon>Fungi</taxon>
        <taxon>Dikarya</taxon>
        <taxon>Ascomycota</taxon>
        <taxon>Taphrinomycotina</taxon>
        <taxon>Schizosaccharomycetes</taxon>
        <taxon>Schizosaccharomycetales</taxon>
        <taxon>Schizosaccharomycetaceae</taxon>
        <taxon>Schizosaccharomyces</taxon>
    </lineage>
</organism>
<sequence>MKKRSETLGSDQSSSEIIEHVLEELNLKNIERRVKKYDQIESEYKTNIENEKKAFIKDVSQVQQKIKEFEIQKANQIKQLNEEKLSIEARKQQLEIEIRNQLLQYAEKLRIVVKTPMNQPTNTEV</sequence>
<feature type="chain" id="PRO_0000297692" description="Linear element protein rec27">
    <location>
        <begin position="1"/>
        <end position="125"/>
    </location>
</feature>
<feature type="coiled-coil region" evidence="1">
    <location>
        <begin position="45"/>
        <end position="104"/>
    </location>
</feature>
<feature type="mutagenesis site" description="Decreases meiotic gene conversion at ade6 and double-strand break (DSB) formation at a DSB hotspot." evidence="5">
    <original>K</original>
    <variation>E</variation>
    <location>
        <position position="28"/>
    </location>
</feature>
<feature type="mutagenesis site" description="Decreases meiotic gene conversion at ade6, and crossing-over between ade6 and arg1." evidence="5">
    <original>R</original>
    <variation>E</variation>
    <location>
        <position position="32"/>
    </location>
</feature>
<feature type="mutagenesis site" description="Decreases meiotic gene conversion at ade6, crossing-over between ade6 and arg1, and double-strand break (DSB) formation at a DSB hotspot." evidence="5">
    <original>K</original>
    <variation>E</variation>
    <location>
        <position position="36"/>
    </location>
</feature>
<feature type="mutagenesis site" description="Strongly decreases meiotic gene conversion at ade6, crossing-over between ade6 and arg1, and abolishes double-strand break (DSB) formation at a DSB hotspot." evidence="5">
    <original>Q</original>
    <variation>K</variation>
    <location>
        <position position="119"/>
    </location>
</feature>